<sequence>MPLLNTLATPYAEALLQVTDGRSESDDVAAQCKELLAVWDSSTALRDAMTSPVLEPAAKKQALAQLLAEQIKPSLMNLLKVLADRQRLTALDAVLRRYLELYRESRNISLAHVRCAQALSDDQTKALTAKVQSMVGTGSVEIDLTIDASLIGGFVINIGSQVIDASLSGQVRRLGLSLAKAS</sequence>
<evidence type="ECO:0000255" key="1">
    <source>
        <dbReference type="HAMAP-Rule" id="MF_01416"/>
    </source>
</evidence>
<proteinExistence type="inferred from homology"/>
<name>ATPD_SYNPW</name>
<reference key="1">
    <citation type="submission" date="2006-05" db="EMBL/GenBank/DDBJ databases">
        <authorList>
            <consortium name="Genoscope"/>
        </authorList>
    </citation>
    <scope>NUCLEOTIDE SEQUENCE [LARGE SCALE GENOMIC DNA]</scope>
    <source>
        <strain>WH7803</strain>
    </source>
</reference>
<feature type="chain" id="PRO_0000371181" description="ATP synthase subunit delta">
    <location>
        <begin position="1"/>
        <end position="182"/>
    </location>
</feature>
<protein>
    <recommendedName>
        <fullName evidence="1">ATP synthase subunit delta</fullName>
    </recommendedName>
    <alternativeName>
        <fullName evidence="1">ATP synthase F(1) sector subunit delta</fullName>
    </alternativeName>
    <alternativeName>
        <fullName evidence="1">F-type ATPase subunit delta</fullName>
        <shortName evidence="1">F-ATPase subunit delta</shortName>
    </alternativeName>
</protein>
<organism>
    <name type="scientific">Synechococcus sp. (strain WH7803)</name>
    <dbReference type="NCBI Taxonomy" id="32051"/>
    <lineage>
        <taxon>Bacteria</taxon>
        <taxon>Bacillati</taxon>
        <taxon>Cyanobacteriota</taxon>
        <taxon>Cyanophyceae</taxon>
        <taxon>Synechococcales</taxon>
        <taxon>Synechococcaceae</taxon>
        <taxon>Synechococcus</taxon>
    </lineage>
</organism>
<keyword id="KW-0066">ATP synthesis</keyword>
<keyword id="KW-0139">CF(1)</keyword>
<keyword id="KW-0375">Hydrogen ion transport</keyword>
<keyword id="KW-0406">Ion transport</keyword>
<keyword id="KW-0472">Membrane</keyword>
<keyword id="KW-1185">Reference proteome</keyword>
<keyword id="KW-0793">Thylakoid</keyword>
<keyword id="KW-0813">Transport</keyword>
<accession>A5GNC9</accession>
<dbReference type="EMBL" id="CT971583">
    <property type="protein sequence ID" value="CAK24444.1"/>
    <property type="molecule type" value="Genomic_DNA"/>
</dbReference>
<dbReference type="SMR" id="A5GNC9"/>
<dbReference type="STRING" id="32051.SynWH7803_2018"/>
<dbReference type="KEGG" id="syx:SynWH7803_2018"/>
<dbReference type="eggNOG" id="COG0712">
    <property type="taxonomic scope" value="Bacteria"/>
</dbReference>
<dbReference type="HOGENOM" id="CLU_085114_4_0_3"/>
<dbReference type="OrthoDB" id="9802471at2"/>
<dbReference type="Proteomes" id="UP000001566">
    <property type="component" value="Chromosome"/>
</dbReference>
<dbReference type="GO" id="GO:0031676">
    <property type="term" value="C:plasma membrane-derived thylakoid membrane"/>
    <property type="evidence" value="ECO:0007669"/>
    <property type="project" value="UniProtKB-SubCell"/>
</dbReference>
<dbReference type="GO" id="GO:0045259">
    <property type="term" value="C:proton-transporting ATP synthase complex"/>
    <property type="evidence" value="ECO:0007669"/>
    <property type="project" value="UniProtKB-KW"/>
</dbReference>
<dbReference type="GO" id="GO:0046933">
    <property type="term" value="F:proton-transporting ATP synthase activity, rotational mechanism"/>
    <property type="evidence" value="ECO:0007669"/>
    <property type="project" value="UniProtKB-UniRule"/>
</dbReference>
<dbReference type="Gene3D" id="1.10.520.20">
    <property type="entry name" value="N-terminal domain of the delta subunit of the F1F0-ATP synthase"/>
    <property type="match status" value="1"/>
</dbReference>
<dbReference type="HAMAP" id="MF_01416">
    <property type="entry name" value="ATP_synth_delta_bact"/>
    <property type="match status" value="1"/>
</dbReference>
<dbReference type="InterPro" id="IPR026015">
    <property type="entry name" value="ATP_synth_OSCP/delta_N_sf"/>
</dbReference>
<dbReference type="InterPro" id="IPR020781">
    <property type="entry name" value="ATPase_OSCP/d_CS"/>
</dbReference>
<dbReference type="InterPro" id="IPR000711">
    <property type="entry name" value="ATPase_OSCP/dsu"/>
</dbReference>
<dbReference type="NCBIfam" id="TIGR01145">
    <property type="entry name" value="ATP_synt_delta"/>
    <property type="match status" value="1"/>
</dbReference>
<dbReference type="PANTHER" id="PTHR11910">
    <property type="entry name" value="ATP SYNTHASE DELTA CHAIN"/>
    <property type="match status" value="1"/>
</dbReference>
<dbReference type="Pfam" id="PF00213">
    <property type="entry name" value="OSCP"/>
    <property type="match status" value="1"/>
</dbReference>
<dbReference type="PRINTS" id="PR00125">
    <property type="entry name" value="ATPASEDELTA"/>
</dbReference>
<dbReference type="SUPFAM" id="SSF47928">
    <property type="entry name" value="N-terminal domain of the delta subunit of the F1F0-ATP synthase"/>
    <property type="match status" value="1"/>
</dbReference>
<dbReference type="PROSITE" id="PS00389">
    <property type="entry name" value="ATPASE_DELTA"/>
    <property type="match status" value="1"/>
</dbReference>
<comment type="function">
    <text evidence="1">F(1)F(0) ATP synthase produces ATP from ADP in the presence of a proton or sodium gradient. F-type ATPases consist of two structural domains, F(1) containing the extramembraneous catalytic core and F(0) containing the membrane proton channel, linked together by a central stalk and a peripheral stalk. During catalysis, ATP synthesis in the catalytic domain of F(1) is coupled via a rotary mechanism of the central stalk subunits to proton translocation.</text>
</comment>
<comment type="function">
    <text evidence="1">This protein is part of the stalk that links CF(0) to CF(1). It either transmits conformational changes from CF(0) to CF(1) or is implicated in proton conduction.</text>
</comment>
<comment type="subunit">
    <text evidence="1">F-type ATPases have 2 components, F(1) - the catalytic core - and F(0) - the membrane proton channel. F(1) has five subunits: alpha(3), beta(3), gamma(1), delta(1), epsilon(1). CF(0) has four main subunits: a(1), b(1), b'(1) and c(10-14). The alpha and beta chains form an alternating ring which encloses part of the gamma chain. F(1) is attached to F(0) by a central stalk formed by the gamma and epsilon chains, while a peripheral stalk is formed by the delta, b and b' chains.</text>
</comment>
<comment type="subcellular location">
    <subcellularLocation>
        <location evidence="1">Cellular thylakoid membrane</location>
        <topology evidence="1">Peripheral membrane protein</topology>
    </subcellularLocation>
</comment>
<comment type="similarity">
    <text evidence="1">Belongs to the ATPase delta chain family.</text>
</comment>
<gene>
    <name evidence="1" type="primary">atpH</name>
    <name evidence="1" type="synonym">atpD</name>
    <name type="ordered locus">SynWH7803_2018</name>
</gene>